<reference key="1">
    <citation type="journal article" date="1991" name="Mol. Gen. Genet.">
        <title>Molecular cloning and nucleotide sequence of the Rhizobium phaseoli recA gene.</title>
        <authorList>
            <person name="Michiels J."/>
            <person name="Vande Broek A."/>
            <person name="Vanderleyden J."/>
        </authorList>
    </citation>
    <scope>NUCLEOTIDE SEQUENCE [GENOMIC DNA]</scope>
    <source>
        <strain>CNPAF512</strain>
    </source>
</reference>
<reference key="2">
    <citation type="submission" date="1995-02" db="EMBL/GenBank/DDBJ databases">
        <authorList>
            <person name="Michiels J."/>
        </authorList>
    </citation>
    <scope>SEQUENCE REVISION</scope>
</reference>
<organism>
    <name type="scientific">Rhizobium etli</name>
    <dbReference type="NCBI Taxonomy" id="29449"/>
    <lineage>
        <taxon>Bacteria</taxon>
        <taxon>Pseudomonadati</taxon>
        <taxon>Pseudomonadota</taxon>
        <taxon>Alphaproteobacteria</taxon>
        <taxon>Hyphomicrobiales</taxon>
        <taxon>Rhizobiaceae</taxon>
        <taxon>Rhizobium/Agrobacterium group</taxon>
        <taxon>Rhizobium</taxon>
    </lineage>
</organism>
<evidence type="ECO:0000255" key="1">
    <source>
        <dbReference type="HAMAP-Rule" id="MF_00268"/>
    </source>
</evidence>
<evidence type="ECO:0000305" key="2"/>
<protein>
    <recommendedName>
        <fullName evidence="1">Protein RecA</fullName>
    </recommendedName>
    <alternativeName>
        <fullName evidence="1">Recombinase A</fullName>
    </alternativeName>
</protein>
<keyword id="KW-0067">ATP-binding</keyword>
<keyword id="KW-0963">Cytoplasm</keyword>
<keyword id="KW-0227">DNA damage</keyword>
<keyword id="KW-0233">DNA recombination</keyword>
<keyword id="KW-0234">DNA repair</keyword>
<keyword id="KW-0238">DNA-binding</keyword>
<keyword id="KW-0547">Nucleotide-binding</keyword>
<keyword id="KW-0742">SOS response</keyword>
<comment type="function">
    <text evidence="1">Can catalyze the hydrolysis of ATP in the presence of single-stranded DNA, the ATP-dependent uptake of single-stranded DNA by duplex DNA, and the ATP-dependent hybridization of homologous single-stranded DNAs. It interacts with LexA causing its activation and leading to its autocatalytic cleavage.</text>
</comment>
<comment type="subcellular location">
    <subcellularLocation>
        <location evidence="1">Cytoplasm</location>
    </subcellularLocation>
</comment>
<comment type="similarity">
    <text evidence="1">Belongs to the RecA family.</text>
</comment>
<comment type="caution">
    <text evidence="2">Strain CNPAF512 was originally thought to originate from R.leguminosarum bv phaseoli.</text>
</comment>
<gene>
    <name evidence="1" type="primary">recA</name>
</gene>
<feature type="chain" id="PRO_0000122812" description="Protein RecA">
    <location>
        <begin position="1"/>
        <end position="361"/>
    </location>
</feature>
<feature type="binding site" evidence="1">
    <location>
        <begin position="77"/>
        <end position="84"/>
    </location>
    <ligand>
        <name>ATP</name>
        <dbReference type="ChEBI" id="CHEBI:30616"/>
    </ligand>
</feature>
<name>RECA_RHIET</name>
<dbReference type="EMBL" id="X62479">
    <property type="protein sequence ID" value="CAA44346.1"/>
    <property type="molecule type" value="Genomic_DNA"/>
</dbReference>
<dbReference type="PIR" id="S17782">
    <property type="entry name" value="S17782"/>
</dbReference>
<dbReference type="SMR" id="P24543"/>
<dbReference type="STRING" id="29449.NXC12_CH02370"/>
<dbReference type="GO" id="GO:0005829">
    <property type="term" value="C:cytosol"/>
    <property type="evidence" value="ECO:0007669"/>
    <property type="project" value="TreeGrafter"/>
</dbReference>
<dbReference type="GO" id="GO:0005524">
    <property type="term" value="F:ATP binding"/>
    <property type="evidence" value="ECO:0007669"/>
    <property type="project" value="UniProtKB-UniRule"/>
</dbReference>
<dbReference type="GO" id="GO:0016887">
    <property type="term" value="F:ATP hydrolysis activity"/>
    <property type="evidence" value="ECO:0007669"/>
    <property type="project" value="InterPro"/>
</dbReference>
<dbReference type="GO" id="GO:0140664">
    <property type="term" value="F:ATP-dependent DNA damage sensor activity"/>
    <property type="evidence" value="ECO:0007669"/>
    <property type="project" value="InterPro"/>
</dbReference>
<dbReference type="GO" id="GO:0003684">
    <property type="term" value="F:damaged DNA binding"/>
    <property type="evidence" value="ECO:0007669"/>
    <property type="project" value="UniProtKB-UniRule"/>
</dbReference>
<dbReference type="GO" id="GO:0003697">
    <property type="term" value="F:single-stranded DNA binding"/>
    <property type="evidence" value="ECO:0007669"/>
    <property type="project" value="UniProtKB-UniRule"/>
</dbReference>
<dbReference type="GO" id="GO:0006310">
    <property type="term" value="P:DNA recombination"/>
    <property type="evidence" value="ECO:0007669"/>
    <property type="project" value="UniProtKB-UniRule"/>
</dbReference>
<dbReference type="GO" id="GO:0006281">
    <property type="term" value="P:DNA repair"/>
    <property type="evidence" value="ECO:0007669"/>
    <property type="project" value="UniProtKB-UniRule"/>
</dbReference>
<dbReference type="GO" id="GO:0009432">
    <property type="term" value="P:SOS response"/>
    <property type="evidence" value="ECO:0007669"/>
    <property type="project" value="UniProtKB-UniRule"/>
</dbReference>
<dbReference type="CDD" id="cd00983">
    <property type="entry name" value="RecA"/>
    <property type="match status" value="1"/>
</dbReference>
<dbReference type="FunFam" id="3.40.50.300:FF:000087">
    <property type="entry name" value="Recombinase RecA"/>
    <property type="match status" value="1"/>
</dbReference>
<dbReference type="Gene3D" id="3.40.50.300">
    <property type="entry name" value="P-loop containing nucleotide triphosphate hydrolases"/>
    <property type="match status" value="1"/>
</dbReference>
<dbReference type="HAMAP" id="MF_00268">
    <property type="entry name" value="RecA"/>
    <property type="match status" value="1"/>
</dbReference>
<dbReference type="InterPro" id="IPR003593">
    <property type="entry name" value="AAA+_ATPase"/>
</dbReference>
<dbReference type="InterPro" id="IPR013765">
    <property type="entry name" value="DNA_recomb/repair_RecA"/>
</dbReference>
<dbReference type="InterPro" id="IPR020584">
    <property type="entry name" value="DNA_recomb/repair_RecA_CS"/>
</dbReference>
<dbReference type="InterPro" id="IPR027417">
    <property type="entry name" value="P-loop_NTPase"/>
</dbReference>
<dbReference type="InterPro" id="IPR049261">
    <property type="entry name" value="RecA-like_C"/>
</dbReference>
<dbReference type="InterPro" id="IPR049428">
    <property type="entry name" value="RecA-like_N"/>
</dbReference>
<dbReference type="InterPro" id="IPR020588">
    <property type="entry name" value="RecA_ATP-bd"/>
</dbReference>
<dbReference type="InterPro" id="IPR023400">
    <property type="entry name" value="RecA_C_sf"/>
</dbReference>
<dbReference type="InterPro" id="IPR020587">
    <property type="entry name" value="RecA_monomer-monomer_interface"/>
</dbReference>
<dbReference type="NCBIfam" id="TIGR02012">
    <property type="entry name" value="tigrfam_recA"/>
    <property type="match status" value="1"/>
</dbReference>
<dbReference type="PANTHER" id="PTHR45900:SF1">
    <property type="entry name" value="MITOCHONDRIAL DNA REPAIR PROTEIN RECA HOMOLOG-RELATED"/>
    <property type="match status" value="1"/>
</dbReference>
<dbReference type="PANTHER" id="PTHR45900">
    <property type="entry name" value="RECA"/>
    <property type="match status" value="1"/>
</dbReference>
<dbReference type="Pfam" id="PF00154">
    <property type="entry name" value="RecA"/>
    <property type="match status" value="1"/>
</dbReference>
<dbReference type="Pfam" id="PF21096">
    <property type="entry name" value="RecA_C"/>
    <property type="match status" value="1"/>
</dbReference>
<dbReference type="PRINTS" id="PR00142">
    <property type="entry name" value="RECA"/>
</dbReference>
<dbReference type="SMART" id="SM00382">
    <property type="entry name" value="AAA"/>
    <property type="match status" value="1"/>
</dbReference>
<dbReference type="SUPFAM" id="SSF52540">
    <property type="entry name" value="P-loop containing nucleoside triphosphate hydrolases"/>
    <property type="match status" value="1"/>
</dbReference>
<dbReference type="SUPFAM" id="SSF54752">
    <property type="entry name" value="RecA protein, C-terminal domain"/>
    <property type="match status" value="1"/>
</dbReference>
<dbReference type="PROSITE" id="PS00321">
    <property type="entry name" value="RECA_1"/>
    <property type="match status" value="1"/>
</dbReference>
<dbReference type="PROSITE" id="PS50162">
    <property type="entry name" value="RECA_2"/>
    <property type="match status" value="1"/>
</dbReference>
<dbReference type="PROSITE" id="PS50163">
    <property type="entry name" value="RECA_3"/>
    <property type="match status" value="1"/>
</dbReference>
<sequence length="361" mass="38673">MSQNSLRLVEDKSVDKSKALEAALSQIERSFGKGSIMKLGSNENVIEIETISTGSLGLDIALGVGGLPKGRIIEIYGPESSGKTTLALQTIAESQKKGGICAFVDAEHALDPVYARKLGVDLQNLLISQPDTGEQALEITDTLVRSGAVDVLVVDSVAALTPRAEIEGEMGDSLPGLQARLMSQALRKLTASISKSNTMVIFINQIRMKIGVMFGSPETTTGGNALKFYASVRLDIRRIGSVKEREEVIGNQTRVKVVKNKMAPPFKQVEFDIMYGEGVSKTGELVDLGVKAGIVEKSGAWFSYNSQRLGQGGENAKTFLRDNPDLAREIELALRENAGLIADRFLQNGGPDADDGDGADM</sequence>
<proteinExistence type="inferred from homology"/>
<accession>P24543</accession>